<reference key="1">
    <citation type="journal article" date="2005" name="FEBS J.">
        <title>A novel glycogen-targeting subunit of protein phosphatase 1 that is regulated by insulin and shows differential tissue distribution in humans and rodents.</title>
        <authorList>
            <person name="Munro S."/>
            <person name="Ceulemans H."/>
            <person name="Bollen M."/>
            <person name="Diplexcito J."/>
            <person name="Cohen P.T.W."/>
        </authorList>
    </citation>
    <scope>NUCLEOTIDE SEQUENCE [MRNA]</scope>
    <scope>MOTIF</scope>
    <scope>REGIONS</scope>
    <scope>FUNCTION</scope>
    <scope>TISSUE SPECIFICITY</scope>
</reference>
<reference key="2">
    <citation type="journal article" date="2004" name="Nat. Genet.">
        <title>Complete sequencing and characterization of 21,243 full-length human cDNAs.</title>
        <authorList>
            <person name="Ota T."/>
            <person name="Suzuki Y."/>
            <person name="Nishikawa T."/>
            <person name="Otsuki T."/>
            <person name="Sugiyama T."/>
            <person name="Irie R."/>
            <person name="Wakamatsu A."/>
            <person name="Hayashi K."/>
            <person name="Sato H."/>
            <person name="Nagai K."/>
            <person name="Kimura K."/>
            <person name="Makita H."/>
            <person name="Sekine M."/>
            <person name="Obayashi M."/>
            <person name="Nishi T."/>
            <person name="Shibahara T."/>
            <person name="Tanaka T."/>
            <person name="Ishii S."/>
            <person name="Yamamoto J."/>
            <person name="Saito K."/>
            <person name="Kawai Y."/>
            <person name="Isono Y."/>
            <person name="Nakamura Y."/>
            <person name="Nagahari K."/>
            <person name="Murakami K."/>
            <person name="Yasuda T."/>
            <person name="Iwayanagi T."/>
            <person name="Wagatsuma M."/>
            <person name="Shiratori A."/>
            <person name="Sudo H."/>
            <person name="Hosoiri T."/>
            <person name="Kaku Y."/>
            <person name="Kodaira H."/>
            <person name="Kondo H."/>
            <person name="Sugawara M."/>
            <person name="Takahashi M."/>
            <person name="Kanda K."/>
            <person name="Yokoi T."/>
            <person name="Furuya T."/>
            <person name="Kikkawa E."/>
            <person name="Omura Y."/>
            <person name="Abe K."/>
            <person name="Kamihara K."/>
            <person name="Katsuta N."/>
            <person name="Sato K."/>
            <person name="Tanikawa M."/>
            <person name="Yamazaki M."/>
            <person name="Ninomiya K."/>
            <person name="Ishibashi T."/>
            <person name="Yamashita H."/>
            <person name="Murakawa K."/>
            <person name="Fujimori K."/>
            <person name="Tanai H."/>
            <person name="Kimata M."/>
            <person name="Watanabe M."/>
            <person name="Hiraoka S."/>
            <person name="Chiba Y."/>
            <person name="Ishida S."/>
            <person name="Ono Y."/>
            <person name="Takiguchi S."/>
            <person name="Watanabe S."/>
            <person name="Yosida M."/>
            <person name="Hotuta T."/>
            <person name="Kusano J."/>
            <person name="Kanehori K."/>
            <person name="Takahashi-Fujii A."/>
            <person name="Hara H."/>
            <person name="Tanase T.-O."/>
            <person name="Nomura Y."/>
            <person name="Togiya S."/>
            <person name="Komai F."/>
            <person name="Hara R."/>
            <person name="Takeuchi K."/>
            <person name="Arita M."/>
            <person name="Imose N."/>
            <person name="Musashino K."/>
            <person name="Yuuki H."/>
            <person name="Oshima A."/>
            <person name="Sasaki N."/>
            <person name="Aotsuka S."/>
            <person name="Yoshikawa Y."/>
            <person name="Matsunawa H."/>
            <person name="Ichihara T."/>
            <person name="Shiohata N."/>
            <person name="Sano S."/>
            <person name="Moriya S."/>
            <person name="Momiyama H."/>
            <person name="Satoh N."/>
            <person name="Takami S."/>
            <person name="Terashima Y."/>
            <person name="Suzuki O."/>
            <person name="Nakagawa S."/>
            <person name="Senoh A."/>
            <person name="Mizoguchi H."/>
            <person name="Goto Y."/>
            <person name="Shimizu F."/>
            <person name="Wakebe H."/>
            <person name="Hishigaki H."/>
            <person name="Watanabe T."/>
            <person name="Sugiyama A."/>
            <person name="Takemoto M."/>
            <person name="Kawakami B."/>
            <person name="Yamazaki M."/>
            <person name="Watanabe K."/>
            <person name="Kumagai A."/>
            <person name="Itakura S."/>
            <person name="Fukuzumi Y."/>
            <person name="Fujimori Y."/>
            <person name="Komiyama M."/>
            <person name="Tashiro H."/>
            <person name="Tanigami A."/>
            <person name="Fujiwara T."/>
            <person name="Ono T."/>
            <person name="Yamada K."/>
            <person name="Fujii Y."/>
            <person name="Ozaki K."/>
            <person name="Hirao M."/>
            <person name="Ohmori Y."/>
            <person name="Kawabata A."/>
            <person name="Hikiji T."/>
            <person name="Kobatake N."/>
            <person name="Inagaki H."/>
            <person name="Ikema Y."/>
            <person name="Okamoto S."/>
            <person name="Okitani R."/>
            <person name="Kawakami T."/>
            <person name="Noguchi S."/>
            <person name="Itoh T."/>
            <person name="Shigeta K."/>
            <person name="Senba T."/>
            <person name="Matsumura K."/>
            <person name="Nakajima Y."/>
            <person name="Mizuno T."/>
            <person name="Morinaga M."/>
            <person name="Sasaki M."/>
            <person name="Togashi T."/>
            <person name="Oyama M."/>
            <person name="Hata H."/>
            <person name="Watanabe M."/>
            <person name="Komatsu T."/>
            <person name="Mizushima-Sugano J."/>
            <person name="Satoh T."/>
            <person name="Shirai Y."/>
            <person name="Takahashi Y."/>
            <person name="Nakagawa K."/>
            <person name="Okumura K."/>
            <person name="Nagase T."/>
            <person name="Nomura N."/>
            <person name="Kikuchi H."/>
            <person name="Masuho Y."/>
            <person name="Yamashita R."/>
            <person name="Nakai K."/>
            <person name="Yada T."/>
            <person name="Nakamura Y."/>
            <person name="Ohara O."/>
            <person name="Isogai T."/>
            <person name="Sugano S."/>
        </authorList>
    </citation>
    <scope>NUCLEOTIDE SEQUENCE [LARGE SCALE MRNA]</scope>
    <source>
        <tissue>Spleen</tissue>
    </source>
</reference>
<reference key="3">
    <citation type="submission" date="2005-09" db="EMBL/GenBank/DDBJ databases">
        <authorList>
            <person name="Mural R.J."/>
            <person name="Istrail S."/>
            <person name="Sutton G.G."/>
            <person name="Florea L."/>
            <person name="Halpern A.L."/>
            <person name="Mobarry C.M."/>
            <person name="Lippert R."/>
            <person name="Walenz B."/>
            <person name="Shatkay H."/>
            <person name="Dew I."/>
            <person name="Miller J.R."/>
            <person name="Flanigan M.J."/>
            <person name="Edwards N.J."/>
            <person name="Bolanos R."/>
            <person name="Fasulo D."/>
            <person name="Halldorsson B.V."/>
            <person name="Hannenhalli S."/>
            <person name="Turner R."/>
            <person name="Yooseph S."/>
            <person name="Lu F."/>
            <person name="Nusskern D.R."/>
            <person name="Shue B.C."/>
            <person name="Zheng X.H."/>
            <person name="Zhong F."/>
            <person name="Delcher A.L."/>
            <person name="Huson D.H."/>
            <person name="Kravitz S.A."/>
            <person name="Mouchard L."/>
            <person name="Reinert K."/>
            <person name="Remington K.A."/>
            <person name="Clark A.G."/>
            <person name="Waterman M.S."/>
            <person name="Eichler E.E."/>
            <person name="Adams M.D."/>
            <person name="Hunkapiller M.W."/>
            <person name="Myers E.W."/>
            <person name="Venter J.C."/>
        </authorList>
    </citation>
    <scope>NUCLEOTIDE SEQUENCE [LARGE SCALE GENOMIC DNA]</scope>
</reference>
<reference key="4">
    <citation type="journal article" date="2013" name="J. Proteome Res.">
        <title>Toward a comprehensive characterization of a human cancer cell phosphoproteome.</title>
        <authorList>
            <person name="Zhou H."/>
            <person name="Di Palma S."/>
            <person name="Preisinger C."/>
            <person name="Peng M."/>
            <person name="Polat A.N."/>
            <person name="Heck A.J."/>
            <person name="Mohammed S."/>
        </authorList>
    </citation>
    <scope>PHOSPHORYLATION [LARGE SCALE ANALYSIS] AT SER-16 AND SER-33</scope>
    <scope>IDENTIFICATION BY MASS SPECTROMETRY [LARGE SCALE ANALYSIS]</scope>
    <source>
        <tissue>Erythroleukemia</tissue>
    </source>
</reference>
<reference key="5">
    <citation type="journal article" date="2014" name="J. Proteomics">
        <title>An enzyme assisted RP-RPLC approach for in-depth analysis of human liver phosphoproteome.</title>
        <authorList>
            <person name="Bian Y."/>
            <person name="Song C."/>
            <person name="Cheng K."/>
            <person name="Dong M."/>
            <person name="Wang F."/>
            <person name="Huang J."/>
            <person name="Sun D."/>
            <person name="Wang L."/>
            <person name="Ye M."/>
            <person name="Zou H."/>
        </authorList>
    </citation>
    <scope>PHOSPHORYLATION [LARGE SCALE ANALYSIS] AT SER-66</scope>
    <scope>IDENTIFICATION BY MASS SPECTROMETRY [LARGE SCALE ANALYSIS]</scope>
    <source>
        <tissue>Liver</tissue>
    </source>
</reference>
<accession>Q9H7J1</accession>
<accession>D3DS47</accession>
<feature type="chain" id="PRO_0000338638" description="Protein phosphatase 1 regulatory subunit 3E">
    <location>
        <begin position="1"/>
        <end position="279"/>
    </location>
</feature>
<feature type="domain" description="CBM21" evidence="1">
    <location>
        <begin position="154"/>
        <end position="259"/>
    </location>
</feature>
<feature type="region of interest" description="Disordered" evidence="2">
    <location>
        <begin position="28"/>
        <end position="86"/>
    </location>
</feature>
<feature type="region of interest" description="Glycogen-binding motif">
    <location>
        <begin position="176"/>
        <end position="198"/>
    </location>
</feature>
<feature type="region of interest" description="Substrate-binding motif">
    <location>
        <begin position="248"/>
        <end position="256"/>
    </location>
</feature>
<feature type="short sequence motif" description="PP1-binding motif">
    <location>
        <begin position="87"/>
        <end position="90"/>
    </location>
</feature>
<feature type="compositionally biased region" description="Basic residues" evidence="2">
    <location>
        <begin position="51"/>
        <end position="65"/>
    </location>
</feature>
<feature type="modified residue" description="Phosphoserine" evidence="5">
    <location>
        <position position="16"/>
    </location>
</feature>
<feature type="modified residue" description="Phosphoserine" evidence="5">
    <location>
        <position position="33"/>
    </location>
</feature>
<feature type="modified residue" description="Phosphoserine" evidence="6">
    <location>
        <position position="66"/>
    </location>
</feature>
<proteinExistence type="evidence at protein level"/>
<protein>
    <recommendedName>
        <fullName>Protein phosphatase 1 regulatory subunit 3E</fullName>
    </recommendedName>
</protein>
<comment type="function">
    <text evidence="3">Acts as a glycogen-targeting subunit for PP1. PP1 is involved in glycogen metabolism and contributes to the activation of glycogen synthase leading to an increase in glycogen synthesis.</text>
</comment>
<comment type="tissue specificity">
    <text evidence="3">Expressed in skeletal muscle and heart with barely detectable levels in liver.</text>
</comment>
<comment type="domain">
    <text>The CBM21 domain is known to be involved in the localization to glycogen and is characteristic of some regulatory subunit of phosphatase complexes.</text>
</comment>
<comment type="sequence caution" evidence="4">
    <conflict type="erroneous initiation">
        <sequence resource="EMBL-CDS" id="BAB15779"/>
    </conflict>
</comment>
<organism>
    <name type="scientific">Homo sapiens</name>
    <name type="common">Human</name>
    <dbReference type="NCBI Taxonomy" id="9606"/>
    <lineage>
        <taxon>Eukaryota</taxon>
        <taxon>Metazoa</taxon>
        <taxon>Chordata</taxon>
        <taxon>Craniata</taxon>
        <taxon>Vertebrata</taxon>
        <taxon>Euteleostomi</taxon>
        <taxon>Mammalia</taxon>
        <taxon>Eutheria</taxon>
        <taxon>Euarchontoglires</taxon>
        <taxon>Primates</taxon>
        <taxon>Haplorrhini</taxon>
        <taxon>Catarrhini</taxon>
        <taxon>Hominidae</taxon>
        <taxon>Homo</taxon>
    </lineage>
</organism>
<keyword id="KW-0119">Carbohydrate metabolism</keyword>
<keyword id="KW-0321">Glycogen metabolism</keyword>
<keyword id="KW-0597">Phosphoprotein</keyword>
<keyword id="KW-1267">Proteomics identification</keyword>
<keyword id="KW-1185">Reference proteome</keyword>
<name>PPR3E_HUMAN</name>
<dbReference type="EMBL" id="AK024489">
    <property type="protein sequence ID" value="BAB15779.1"/>
    <property type="status" value="ALT_INIT"/>
    <property type="molecule type" value="mRNA"/>
</dbReference>
<dbReference type="EMBL" id="CH471078">
    <property type="protein sequence ID" value="EAW66170.1"/>
    <property type="molecule type" value="Genomic_DNA"/>
</dbReference>
<dbReference type="EMBL" id="CH471078">
    <property type="protein sequence ID" value="EAW66172.1"/>
    <property type="molecule type" value="Genomic_DNA"/>
</dbReference>
<dbReference type="EMBL" id="CH471078">
    <property type="protein sequence ID" value="EAW66173.1"/>
    <property type="molecule type" value="Genomic_DNA"/>
</dbReference>
<dbReference type="CCDS" id="CCDS61403.1"/>
<dbReference type="RefSeq" id="NP_001263247.1">
    <property type="nucleotide sequence ID" value="NM_001276318.2"/>
</dbReference>
<dbReference type="SMR" id="Q9H7J1"/>
<dbReference type="BioGRID" id="124753">
    <property type="interactions" value="11"/>
</dbReference>
<dbReference type="FunCoup" id="Q9H7J1">
    <property type="interactions" value="200"/>
</dbReference>
<dbReference type="IntAct" id="Q9H7J1">
    <property type="interactions" value="9"/>
</dbReference>
<dbReference type="MINT" id="Q9H7J1"/>
<dbReference type="STRING" id="9606.ENSP00000408288"/>
<dbReference type="CAZy" id="CBM21">
    <property type="family name" value="Carbohydrate-Binding Module Family 21"/>
</dbReference>
<dbReference type="GlyGen" id="Q9H7J1">
    <property type="glycosylation" value="1 site, 1 O-linked glycan (1 site)"/>
</dbReference>
<dbReference type="iPTMnet" id="Q9H7J1"/>
<dbReference type="PhosphoSitePlus" id="Q9H7J1"/>
<dbReference type="BioMuta" id="PPP1R3E"/>
<dbReference type="DMDM" id="190359980"/>
<dbReference type="jPOST" id="Q9H7J1"/>
<dbReference type="MassIVE" id="Q9H7J1"/>
<dbReference type="PaxDb" id="9606-ENSP00000408288"/>
<dbReference type="PeptideAtlas" id="Q9H7J1"/>
<dbReference type="ProteomicsDB" id="81126"/>
<dbReference type="Pumba" id="Q9H7J1"/>
<dbReference type="TopDownProteomics" id="Q9H7J1"/>
<dbReference type="Antibodypedia" id="71726">
    <property type="antibodies" value="8 antibodies from 6 providers"/>
</dbReference>
<dbReference type="DNASU" id="90673"/>
<dbReference type="Ensembl" id="ENST00000452015.9">
    <property type="protein sequence ID" value="ENSP00000408288.3"/>
    <property type="gene ID" value="ENSG00000235194.9"/>
</dbReference>
<dbReference type="GeneID" id="90673"/>
<dbReference type="KEGG" id="hsa:90673"/>
<dbReference type="MANE-Select" id="ENST00000452015.9">
    <property type="protein sequence ID" value="ENSP00000408288.3"/>
    <property type="RefSeq nucleotide sequence ID" value="NM_001276318.2"/>
    <property type="RefSeq protein sequence ID" value="NP_001263247.1"/>
</dbReference>
<dbReference type="UCSC" id="uc031qns.2">
    <property type="organism name" value="human"/>
</dbReference>
<dbReference type="AGR" id="HGNC:14943"/>
<dbReference type="CTD" id="90673"/>
<dbReference type="GeneCards" id="PPP1R3E"/>
<dbReference type="HGNC" id="HGNC:14943">
    <property type="gene designation" value="PPP1R3E"/>
</dbReference>
<dbReference type="HPA" id="ENSG00000235194">
    <property type="expression patterns" value="Tissue enhanced (retina)"/>
</dbReference>
<dbReference type="MIM" id="619540">
    <property type="type" value="gene"/>
</dbReference>
<dbReference type="neXtProt" id="NX_Q9H7J1"/>
<dbReference type="OpenTargets" id="ENSG00000235194"/>
<dbReference type="VEuPathDB" id="HostDB:ENSG00000235194"/>
<dbReference type="eggNOG" id="KOG3986">
    <property type="taxonomic scope" value="Eukaryota"/>
</dbReference>
<dbReference type="GeneTree" id="ENSGT00940000161906"/>
<dbReference type="HOGENOM" id="CLU_040215_0_0_1"/>
<dbReference type="InParanoid" id="Q9H7J1"/>
<dbReference type="OMA" id="FWATEHE"/>
<dbReference type="OrthoDB" id="1881at2759"/>
<dbReference type="PAN-GO" id="Q9H7J1">
    <property type="GO annotations" value="4 GO annotations based on evolutionary models"/>
</dbReference>
<dbReference type="PhylomeDB" id="Q9H7J1"/>
<dbReference type="TreeFam" id="TF105537"/>
<dbReference type="PathwayCommons" id="Q9H7J1"/>
<dbReference type="SignaLink" id="Q9H7J1"/>
<dbReference type="BioGRID-ORCS" id="90673">
    <property type="hits" value="11 hits in 1101 CRISPR screens"/>
</dbReference>
<dbReference type="ChiTaRS" id="PPP1R3E">
    <property type="organism name" value="human"/>
</dbReference>
<dbReference type="GenomeRNAi" id="90673"/>
<dbReference type="Pharos" id="Q9H7J1">
    <property type="development level" value="Tdark"/>
</dbReference>
<dbReference type="PRO" id="PR:Q9H7J1"/>
<dbReference type="Proteomes" id="UP000005640">
    <property type="component" value="Chromosome 14"/>
</dbReference>
<dbReference type="RNAct" id="Q9H7J1">
    <property type="molecule type" value="protein"/>
</dbReference>
<dbReference type="Bgee" id="ENSG00000235194">
    <property type="expression patterns" value="Expressed in right hemisphere of cerebellum and 172 other cell types or tissues"/>
</dbReference>
<dbReference type="ExpressionAtlas" id="Q9H7J1">
    <property type="expression patterns" value="baseline and differential"/>
</dbReference>
<dbReference type="GO" id="GO:0042587">
    <property type="term" value="C:glycogen granule"/>
    <property type="evidence" value="ECO:0000250"/>
    <property type="project" value="UniProtKB"/>
</dbReference>
<dbReference type="GO" id="GO:0000164">
    <property type="term" value="C:protein phosphatase type 1 complex"/>
    <property type="evidence" value="ECO:0000318"/>
    <property type="project" value="GO_Central"/>
</dbReference>
<dbReference type="GO" id="GO:0050196">
    <property type="term" value="F:[phosphorylase] phosphatase activity"/>
    <property type="evidence" value="ECO:0000250"/>
    <property type="project" value="UniProtKB"/>
</dbReference>
<dbReference type="GO" id="GO:2001069">
    <property type="term" value="F:glycogen binding"/>
    <property type="evidence" value="ECO:0000318"/>
    <property type="project" value="GO_Central"/>
</dbReference>
<dbReference type="GO" id="GO:0008157">
    <property type="term" value="F:protein phosphatase 1 binding"/>
    <property type="evidence" value="ECO:0000318"/>
    <property type="project" value="GO_Central"/>
</dbReference>
<dbReference type="GO" id="GO:0005977">
    <property type="term" value="P:glycogen metabolic process"/>
    <property type="evidence" value="ECO:0007669"/>
    <property type="project" value="UniProtKB-KW"/>
</dbReference>
<dbReference type="GO" id="GO:0045725">
    <property type="term" value="P:positive regulation of glycogen biosynthetic process"/>
    <property type="evidence" value="ECO:0000250"/>
    <property type="project" value="UniProtKB"/>
</dbReference>
<dbReference type="GO" id="GO:0005979">
    <property type="term" value="P:regulation of glycogen biosynthetic process"/>
    <property type="evidence" value="ECO:0000318"/>
    <property type="project" value="GO_Central"/>
</dbReference>
<dbReference type="FunFam" id="2.60.40.2440:FF:000002">
    <property type="entry name" value="Protein phosphatase 1 regulatory subunit 3E"/>
    <property type="match status" value="1"/>
</dbReference>
<dbReference type="Gene3D" id="2.60.40.2440">
    <property type="entry name" value="Carbohydrate binding type-21 domain"/>
    <property type="match status" value="1"/>
</dbReference>
<dbReference type="InterPro" id="IPR005036">
    <property type="entry name" value="CBM21_dom"/>
</dbReference>
<dbReference type="InterPro" id="IPR038175">
    <property type="entry name" value="CBM21_dom_sf"/>
</dbReference>
<dbReference type="InterPro" id="IPR050782">
    <property type="entry name" value="PP1_regulatory_subunit_3"/>
</dbReference>
<dbReference type="PANTHER" id="PTHR12307">
    <property type="entry name" value="PROTEIN PHOSPHATASE 1 REGULATORY SUBUNIT"/>
    <property type="match status" value="1"/>
</dbReference>
<dbReference type="PANTHER" id="PTHR12307:SF20">
    <property type="entry name" value="PROTEIN PHOSPHATASE 1 REGULATORY SUBUNIT 3E"/>
    <property type="match status" value="1"/>
</dbReference>
<dbReference type="Pfam" id="PF03370">
    <property type="entry name" value="CBM_21"/>
    <property type="match status" value="1"/>
</dbReference>
<dbReference type="PROSITE" id="PS51159">
    <property type="entry name" value="CBM21"/>
    <property type="match status" value="1"/>
</dbReference>
<evidence type="ECO:0000255" key="1">
    <source>
        <dbReference type="PROSITE-ProRule" id="PRU00491"/>
    </source>
</evidence>
<evidence type="ECO:0000256" key="2">
    <source>
        <dbReference type="SAM" id="MobiDB-lite"/>
    </source>
</evidence>
<evidence type="ECO:0000269" key="3">
    <source>
    </source>
</evidence>
<evidence type="ECO:0000305" key="4"/>
<evidence type="ECO:0007744" key="5">
    <source>
    </source>
</evidence>
<evidence type="ECO:0007744" key="6">
    <source>
    </source>
</evidence>
<sequence>MSRERPPGTDIPRNLSFIAALTERAYYRSQRPSLEEEPEEEPGEGGTRFGARSRAHAPSRGRRARSAPAGGGGARAPRSRSPDTRKRVRFADALGLELAVVRRFRPGELPRVPRHVQIQLQRDALRHFAPCQPRARGLQEARAALEPASEPGFAARLLTQRICLERAEAGPLGVAGSARVVDLAYEKRVSVRWSADGWRSQREAPAAYAGPAPPPPRADRFAFRLPAPPIGGALLFALRYRVTGHEFWDNNGGRDYALRGPEHPGSGGAPEPQGWIHFI</sequence>
<gene>
    <name type="primary">PPP1R3E</name>
</gene>